<organism>
    <name type="scientific">Middelburg virus</name>
    <dbReference type="NCBI Taxonomy" id="11023"/>
    <lineage>
        <taxon>Viruses</taxon>
        <taxon>Riboviria</taxon>
        <taxon>Orthornavirae</taxon>
        <taxon>Kitrinoviricota</taxon>
        <taxon>Alsuviricetes</taxon>
        <taxon>Martellivirales</taxon>
        <taxon>Togaviridae</taxon>
        <taxon>Alphavirus</taxon>
    </lineage>
</organism>
<accession>P03318</accession>
<feature type="chain" id="PRO_0000308394" description="Polyprotein nsP1234">
    <location>
        <begin position="1" status="less than"/>
        <end position="995"/>
    </location>
</feature>
<feature type="chain" id="PRO_0000041212" description="Non-structural protein 3'">
    <location>
        <begin position="1" status="less than"/>
        <end position="385"/>
    </location>
</feature>
<feature type="chain" id="PRO_0000446646" description="Polyprotein P123'">
    <location>
        <begin position="1" status="less than"/>
        <end position="385"/>
    </location>
</feature>
<feature type="chain" id="PRO_0000228780" description="Non-structural protein 3">
    <location>
        <begin position="1" status="less than"/>
        <end position="378"/>
    </location>
</feature>
<feature type="chain" id="PRO_0000446647" description="Polyprotein P123">
    <location>
        <begin position="1" status="less than"/>
        <end position="378"/>
    </location>
</feature>
<feature type="chain" id="PRO_0000041213" description="RNA-directed RNA polymerase nsP4">
    <location>
        <begin position="386"/>
        <end position="995"/>
    </location>
</feature>
<feature type="domain" description="RdRp catalytic" evidence="7">
    <location>
        <begin position="749"/>
        <end position="864"/>
    </location>
</feature>
<feature type="short sequence motif" description="FGDF; binding to host G3BP1" evidence="3">
    <location>
        <begin position="347"/>
        <end position="350"/>
    </location>
</feature>
<feature type="short sequence motif" description="FGDF; binding to host G3BP1" evidence="3">
    <location>
        <begin position="364"/>
        <end position="367"/>
    </location>
</feature>
<feature type="binding site" evidence="5">
    <location>
        <position position="30"/>
    </location>
    <ligand>
        <name>ADP-D-ribose</name>
        <dbReference type="ChEBI" id="CHEBI:57967"/>
    </ligand>
</feature>
<feature type="binding site" evidence="5">
    <location>
        <position position="32"/>
    </location>
    <ligand>
        <name>ADP-D-ribose</name>
        <dbReference type="ChEBI" id="CHEBI:57967"/>
    </ligand>
</feature>
<feature type="binding site" evidence="2">
    <location>
        <position position="180"/>
    </location>
    <ligand>
        <name>Zn(2+)</name>
        <dbReference type="ChEBI" id="CHEBI:29105"/>
    </ligand>
</feature>
<feature type="binding site" evidence="2">
    <location>
        <position position="182"/>
    </location>
    <ligand>
        <name>Zn(2+)</name>
        <dbReference type="ChEBI" id="CHEBI:29105"/>
    </ligand>
</feature>
<feature type="binding site" evidence="2">
    <location>
        <position position="205"/>
    </location>
    <ligand>
        <name>Zn(2+)</name>
        <dbReference type="ChEBI" id="CHEBI:29105"/>
    </ligand>
</feature>
<feature type="binding site" evidence="2">
    <location>
        <position position="223"/>
    </location>
    <ligand>
        <name>Zn(2+)</name>
        <dbReference type="ChEBI" id="CHEBI:29105"/>
    </ligand>
</feature>
<feature type="site" description="Cleavage; by protease nsP2" evidence="2">
    <location>
        <begin position="385"/>
        <end position="386"/>
    </location>
</feature>
<feature type="non-terminal residue">
    <location>
        <position position="1"/>
    </location>
</feature>
<reference key="1">
    <citation type="journal article" date="1983" name="Proc. Natl. Acad. Sci. U.S.A.">
        <title>Sequence coding for the alphavirus nonstructural proteins is interrupted by an opal termination codon.</title>
        <authorList>
            <person name="Strauss E.G."/>
            <person name="Rice C.M."/>
            <person name="Strauss J.H."/>
        </authorList>
    </citation>
    <scope>NUCLEOTIDE SEQUENCE [GENOMIC RNA]</scope>
</reference>
<proteinExistence type="inferred from homology"/>
<name>POLN_MIDDV</name>
<evidence type="ECO:0000250" key="1">
    <source>
        <dbReference type="UniProtKB" id="O90368"/>
    </source>
</evidence>
<evidence type="ECO:0000250" key="2">
    <source>
        <dbReference type="UniProtKB" id="P03317"/>
    </source>
</evidence>
<evidence type="ECO:0000250" key="3">
    <source>
        <dbReference type="UniProtKB" id="P08411"/>
    </source>
</evidence>
<evidence type="ECO:0000250" key="4">
    <source>
        <dbReference type="UniProtKB" id="P27282"/>
    </source>
</evidence>
<evidence type="ECO:0000250" key="5">
    <source>
        <dbReference type="UniProtKB" id="P36328"/>
    </source>
</evidence>
<evidence type="ECO:0000250" key="6">
    <source>
        <dbReference type="UniProtKB" id="Q8JUX6"/>
    </source>
</evidence>
<evidence type="ECO:0000255" key="7">
    <source>
        <dbReference type="PROSITE-ProRule" id="PRU00539"/>
    </source>
</evidence>
<evidence type="ECO:0000305" key="8"/>
<keyword id="KW-1036">Host cytoplasmic vesicle</keyword>
<keyword id="KW-1043">Host membrane</keyword>
<keyword id="KW-0378">Hydrolase</keyword>
<keyword id="KW-0472">Membrane</keyword>
<keyword id="KW-0479">Metal-binding</keyword>
<keyword id="KW-0547">Nucleotide-binding</keyword>
<keyword id="KW-0548">Nucleotidyltransferase</keyword>
<keyword id="KW-0694">RNA-binding</keyword>
<keyword id="KW-0696">RNA-directed RNA polymerase</keyword>
<keyword id="KW-0808">Transferase</keyword>
<keyword id="KW-0832">Ubl conjugation</keyword>
<keyword id="KW-0693">Viral RNA replication</keyword>
<keyword id="KW-0862">Zinc</keyword>
<comment type="function">
    <text evidence="6">Polyprotein P1234: Inactive precursor of the viral replicase, which is activated by cleavages carried out by the viral protease nsP2.</text>
</comment>
<comment type="function">
    <molecule>Polyprotein P123</molecule>
    <text evidence="2">The early replication complex formed by the polyprotein P123 and nsP4 synthesizes minus-strand RNAs (By similarity). As soon P123 is cleaved into mature proteins, the plus-strand RNAs synthesis begins (By similarity).</text>
</comment>
<comment type="function">
    <molecule>Polyprotein P123'</molecule>
    <text evidence="8">The early replication complex formed by the polyprotein P123' and nsP4 synthesizes minus-strand RNAs (Probable). Polyprotein P123' is a short-lived polyprotein that accumulates during early stage of infection (Probable). As soon P123' is cleaved into mature proteins, the plus-strand RNAs synthesis begins (Probable).</text>
</comment>
<comment type="function">
    <molecule>Non-structural protein 3'</molecule>
    <text evidence="2 8">Seems to be essential for minus-strand RNAs and subgenomic 26S mRNAs synthesis (By similarity). Displays mono-ADP-ribosylhydrolase activity (Probable). ADP-ribosylation is a post-translational modification that controls various processes of the host cell and the virus probably needs to revert it for optimal viral replication (Probable). Binds proteins of FXR family and sequesters them into the viral RNA replication complexes thereby inhibiting the formation of host stress granules on viral mRNAs (Probable). The nsp3'-FXR complexes bind viral RNAs and probably orchestrate the assembly of viral replication complexes, thanks to the ability of FXR family members to self-assemble and bind DNA (Probable).</text>
</comment>
<comment type="function">
    <molecule>Non-structural protein 3</molecule>
    <text evidence="2 6">Seems to be essential for minus-strand RNAs and subgenomic 26S mRNAs synthesis (By similarity). Displays mono-ADP-ribosylhydrolase activity (By similarity). ADP-ribosylation is a post-translantional modification that controls various processes of the host cell and the virus probably needs to revert it for optimal viral replication (By similarity). Binds proteins of G3BP family and sequesters them into the viral RNA replication complexes thereby inhibiting the formation of host stress granules on viral mRNAs (By similarity). The nsp3-G3BP complexes bind viral RNAs and probably orchestrate the assembly of viral replication complexes, thanks to the ability of G3BP family members to self-assemble and bind DNA (By similarity).</text>
</comment>
<comment type="function">
    <molecule>RNA-directed RNA polymerase nsP4</molecule>
    <text evidence="2">RNA dependent RNA polymerase (By similarity). Replicates genomic and antigenomic RNA by recognizing replications specific signals. The early replication complex formed by the polyprotein P123 and nsP4 synthesizes minus-strand RNAs (By similarity). The late replication complex composed of fully processed nsP1-nsP4 is responsible for the production of genomic and subgenomic plus-strand RNAs (By similarity). The core catalytic domain of nsP4 also possesses terminal adenylyltransferase (TATase) activity that is probably involved in maintenance and repair of the poly(A) tail, an element required for replication of the viral genome (By similarity).</text>
</comment>
<comment type="catalytic activity">
    <reaction evidence="7">
        <text>RNA(n) + a ribonucleoside 5'-triphosphate = RNA(n+1) + diphosphate</text>
        <dbReference type="Rhea" id="RHEA:21248"/>
        <dbReference type="Rhea" id="RHEA-COMP:14527"/>
        <dbReference type="Rhea" id="RHEA-COMP:17342"/>
        <dbReference type="ChEBI" id="CHEBI:33019"/>
        <dbReference type="ChEBI" id="CHEBI:61557"/>
        <dbReference type="ChEBI" id="CHEBI:140395"/>
        <dbReference type="EC" id="2.7.7.48"/>
    </reaction>
</comment>
<comment type="catalytic activity">
    <reaction evidence="2">
        <text>RNA(n) + ATP = RNA(n)-3'-adenine ribonucleotide + diphosphate</text>
        <dbReference type="Rhea" id="RHEA:11332"/>
        <dbReference type="Rhea" id="RHEA-COMP:14527"/>
        <dbReference type="Rhea" id="RHEA-COMP:17347"/>
        <dbReference type="ChEBI" id="CHEBI:30616"/>
        <dbReference type="ChEBI" id="CHEBI:33019"/>
        <dbReference type="ChEBI" id="CHEBI:140395"/>
        <dbReference type="ChEBI" id="CHEBI:173115"/>
        <dbReference type="EC" id="2.7.7.19"/>
    </reaction>
</comment>
<comment type="catalytic activity">
    <reaction evidence="2">
        <text>4-O-(ADP-D-ribosyl)-L-aspartyl-[protein] + H2O = L-aspartyl-[protein] + ADP-D-ribose + H(+)</text>
        <dbReference type="Rhea" id="RHEA:54428"/>
        <dbReference type="Rhea" id="RHEA-COMP:9867"/>
        <dbReference type="Rhea" id="RHEA-COMP:13832"/>
        <dbReference type="ChEBI" id="CHEBI:15377"/>
        <dbReference type="ChEBI" id="CHEBI:15378"/>
        <dbReference type="ChEBI" id="CHEBI:29961"/>
        <dbReference type="ChEBI" id="CHEBI:57967"/>
        <dbReference type="ChEBI" id="CHEBI:138102"/>
    </reaction>
    <physiologicalReaction direction="left-to-right" evidence="2">
        <dbReference type="Rhea" id="RHEA:54429"/>
    </physiologicalReaction>
</comment>
<comment type="catalytic activity">
    <reaction evidence="2">
        <text>5-O-(ADP-D-ribosyl)-L-glutamyl-[protein] + H2O = L-glutamyl-[protein] + ADP-D-ribose + H(+)</text>
        <dbReference type="Rhea" id="RHEA:58248"/>
        <dbReference type="Rhea" id="RHEA-COMP:10208"/>
        <dbReference type="Rhea" id="RHEA-COMP:15089"/>
        <dbReference type="ChEBI" id="CHEBI:15377"/>
        <dbReference type="ChEBI" id="CHEBI:15378"/>
        <dbReference type="ChEBI" id="CHEBI:29973"/>
        <dbReference type="ChEBI" id="CHEBI:57967"/>
        <dbReference type="ChEBI" id="CHEBI:142540"/>
    </reaction>
    <physiologicalReaction direction="left-to-right" evidence="2">
        <dbReference type="Rhea" id="RHEA:58249"/>
    </physiologicalReaction>
</comment>
<comment type="catalytic activity">
    <reaction evidence="6">
        <text>ADP-alpha-D-ribose 1''-phosphate + H2O = ADP-D-ribose + phosphate</text>
        <dbReference type="Rhea" id="RHEA:25029"/>
        <dbReference type="ChEBI" id="CHEBI:15377"/>
        <dbReference type="ChEBI" id="CHEBI:43474"/>
        <dbReference type="ChEBI" id="CHEBI:57967"/>
        <dbReference type="ChEBI" id="CHEBI:58753"/>
        <dbReference type="EC" id="3.1.3.84"/>
    </reaction>
    <physiologicalReaction direction="left-to-right" evidence="6">
        <dbReference type="Rhea" id="RHEA:25030"/>
    </physiologicalReaction>
</comment>
<comment type="cofactor">
    <cofactor evidence="2">
        <name>Mg(2+)</name>
        <dbReference type="ChEBI" id="CHEBI:18420"/>
    </cofactor>
    <cofactor evidence="2">
        <name>Mn(2+)</name>
        <dbReference type="ChEBI" id="CHEBI:29035"/>
    </cofactor>
    <text evidence="2">For nsP4 adenylyltransferase activity; Mn(2+) supports catalysis at 60% of the levels observed with Mg(2+).</text>
</comment>
<comment type="cofactor">
    <cofactor evidence="2">
        <name>Mg(2+)</name>
        <dbReference type="ChEBI" id="CHEBI:18420"/>
    </cofactor>
    <text evidence="2">For nsP4 RNA-directed RNA polymerase activity.</text>
</comment>
<comment type="subunit">
    <molecule>Non-structural protein 3</molecule>
    <text evidence="2 4">Interacts with mRNA-capping enzyme nsP1 (By similarity). Interacts with host DDX1. Interacts with host DDX3. Interacts (via C-terminus) with host G3BP1; this interaction inhibits the formation of host stress granules on viral mRNAs and the nsp3-G3BP1 complexes bind viral RNAs and probably orchestrate the assembly of viral replication complexes (By similarity). Interacts (via C-terminus) with host G3BP2; this interaction inhibits the formation of host stress granules on viral mRNAs and the nsp3-G3BP2 complexes bind viral RNAs and probably orchestrate the assembly of viral replication complexes (By similarity).</text>
</comment>
<comment type="subunit">
    <molecule>RNA-directed RNA polymerase nsP4</molecule>
    <text evidence="6">Interacts with mRNA-capping enzyme nsP1 (By similarity). Interacts with protease nsP2 (By similarity). interacts with itself (By similarity).</text>
</comment>
<comment type="subcellular location">
    <molecule>Polyprotein nsP1234</molecule>
    <subcellularLocation>
        <location evidence="8">Host cytoplasmic vesicle membrane</location>
        <topology evidence="8">Peripheral membrane protein</topology>
    </subcellularLocation>
    <text evidence="8">Part of cytoplasmic vesicles, which are probably formed at the plasma membrane and internalized leading to late endosomal/lysosomal spherules containing the replication complex.</text>
</comment>
<comment type="subcellular location">
    <molecule>Non-structural protein 3</molecule>
    <subcellularLocation>
        <location evidence="2">Host cytoplasmic vesicle membrane</location>
        <topology evidence="8">Peripheral membrane protein</topology>
    </subcellularLocation>
    <text evidence="2">In the late phase of infection, the polyprotein is quickly cleaved before localization to cellular membranes. Then nsP3 and nsP3' form aggregates in cytoplasm (By similarity). NsP3 is also part of cytoplasmic vesicles, which are probably formed at the plasma membrane and internalized leading to late endosomal/lysosomal spherules containing the replication complex (By similarity).</text>
</comment>
<comment type="subcellular location">
    <molecule>Non-structural protein 3'</molecule>
    <subcellularLocation>
        <location evidence="2">Host cytoplasmic vesicle membrane</location>
        <topology evidence="8">Peripheral membrane protein</topology>
    </subcellularLocation>
    <text evidence="2">In the late phase of infection, the polyprotein is quickly cleaved before localization to cellular membranes. Then nsP3 and nsP3' form aggregates in cytoplasm (By similarity). NsP3' is also part of cytoplasmic vesicles, which are probably formed at the plasma membrane and internalized leading to late endosomal/lysosomal spherules containing the replication complex (By similarity).</text>
</comment>
<comment type="subcellular location">
    <molecule>RNA-directed RNA polymerase nsP4</molecule>
    <subcellularLocation>
        <location>Host cytoplasmic vesicle membrane</location>
        <topology evidence="2">Peripheral membrane protein</topology>
    </subcellularLocation>
    <text evidence="3">NsP4 is part of cytoplasmic vesicles, which are probably formed at the plasma membrane and internalized leading to late endosomal/lysosomal spherules containing the replication complex.</text>
</comment>
<comment type="domain">
    <molecule>Non-structural protein 3</molecule>
    <text evidence="2 3">In the N-terminus, the macro domain displays a mono-ADP-ribosylhydrolase activity (By similarity). The central part has a zinc-binding function (By similarity). The C-terminus contains two FGDF motifs necessary and sufficient for formation of the nsP3/G3BP1 complex (By similarity).</text>
</comment>
<comment type="domain">
    <molecule>Non-structural protein 3'</molecule>
    <text evidence="2 3">In the N-terminus, the macro domain displays a mono-ADP-ribosylhydrolase activity (By similarity). The central part has a zinc-binding function (By similarity). The C-terminus contains two FGDF motifs necessary and sufficient for formation of the nsP3'/G3BP1 complex (By similarity).</text>
</comment>
<comment type="PTM">
    <text evidence="2">Polyprotein P1234: Specific enzymatic cleavages in vivo yield mature proteins (By similarity). The processing of the polyprotein is temporally regulated (By similarity). In early stages (1.7 hpi), P1234 is first cleaved in trans through its nsP2 protease activity, releasing P123' and nsP4, which associate to form the early replication complex (By similarity). At the same time, P1234 is also cut at the nsP1/nsP2 site early in infection but with lower efficiency (By similarity). After replication of the viral minus-strand RNAs (4 hpi), the polyproteins are cut at the nsP1/nsP2 and nsP2/nsP3 sites very efficiently, preventing accumulation of P123' and P1234 and allowing the formation of the late replication complex (By similarity). NsP3'/nsP4 site is not cleaved anymore and P34 is produced rather than nsP4 (By similarity).</text>
</comment>
<comment type="PTM">
    <molecule>Polyprotein P123</molecule>
    <text evidence="2">Specific enzymatic cleavages in vivo yield mature proteins (By similarity). The processing of the polyprotein is temporally regulated (By similarity). In early stages (1.7 hpi), P123 is cleaved at the nsP1/nsP2 site with low efficiency (By similarity). After replication of the viral minus-strand RNAs (4 hpi), the polyproteins are cut at the nsP1/nsP2 and nsP2/nsP3 sites very efficiently, preventing accumulation of P123 and allowing the formation of the late replication complex (By similarity).</text>
</comment>
<comment type="PTM">
    <molecule>Polyprotein P123'</molecule>
    <text evidence="2">Specific enzymatic cleavages in vivo yield mature proteins (By similarity). The processing of the polyprotein is temporally regulated (By similarity). In early stages (1.7 hpi), P123' is cleaved at the nsP1/nsP2 site with low efficiency (By similarity). After replication of the viral minus-strand RNAs (4 hpi), the polyproteins are cut at the nsP1/nsP2 and nsP2/nsP3 sites very efficiently, preventing accumulation of P123' and allowing the formation of the late replication complex (By similarity).</text>
</comment>
<comment type="PTM">
    <molecule>Non-structural protein 3</molecule>
    <text evidence="3">Phosphorylated by host on serines and threonines.</text>
</comment>
<comment type="PTM">
    <molecule>Non-structural protein 3'</molecule>
    <text evidence="3">Phosphorylated by host on serines and threonines.</text>
</comment>
<comment type="PTM">
    <molecule>RNA-directed RNA polymerase nsP4</molecule>
    <text evidence="2">Ubiquitinated; targets the protein for rapid degradation via the ubiquitin system (By similarity). Nsp4 is present in extremely low quantities due to low frequency of translation through the amber stop-codon and the degradation by the ubiquitin pathway (By similarity).</text>
</comment>
<comment type="miscellaneous">
    <text evidence="2">Viral replication produces dsRNA in the late phase of infection, resulting in a strong activation of host EIF2AK2/PKR, leading to almost complete phosphorylation of EIF2A (By similarity). This inactivates completely cellular translation initiation, resulting shutoff of host proteins synthesis (By similarity). However, phosphorylation of EIF2A is probably not the only mechanism responsible for the host translation shutoff (By similarity). The viral translation can still occur normally because it relies on a hairpin structure in the coding region of sgRNA and is EIF2A-, EIF2D-, EIF4G- EIF4A-independent (By similarity).</text>
</comment>
<comment type="miscellaneous">
    <text evidence="1 2 8">The genome codes for P123, but readthrough of a terminator codon UGA occurs between the codons for Ala-378 and Leu-380 giving rise to P1234 (Probable). P1234 is cleaved quickly by nsP2 into P123' and nsP4 (By similarity). Further processing of p123' gives nsP1, nsP2 and nsP3' which is 6 amino acids longer than nsP3 since the cleavage site is after the readthrough (By similarity). This unusual molecular mechanism ensures that few nsP4 are produced compared to other non-structural proteins (By similarity). Mutant viruses with no alternative termination site grow significantly slower than wild-type virus (By similarity). The opal termination codon is frequently mutated to a sense codon on passage in cell culture (By similarity). The presence of the opal codon may be a requirement for viral maintenance in both vertebrate and invertebrate hosts and a selective advantage may be conferred in cell culture for the sense codon (By similarity).</text>
</comment>
<organismHost>
    <name type="scientific">Aedes</name>
    <dbReference type="NCBI Taxonomy" id="7158"/>
</organismHost>
<organismHost>
    <name type="scientific">Mansonia</name>
    <dbReference type="NCBI Taxonomy" id="149459"/>
</organismHost>
<organismHost>
    <name type="scientific">Ovis aries</name>
    <name type="common">Sheep</name>
    <dbReference type="NCBI Taxonomy" id="9940"/>
</organismHost>
<dbReference type="EC" id="3.1.3.84" evidence="8 6"/>
<dbReference type="EC" id="2.7.7.19" evidence="2"/>
<dbReference type="EC" id="2.7.7.48" evidence="7"/>
<dbReference type="EMBL" id="J02246">
    <property type="protein sequence ID" value="AAA96654.1"/>
    <property type="status" value="ALT_TERM"/>
    <property type="molecule type" value="Genomic_RNA"/>
</dbReference>
<dbReference type="EMBL" id="J02246">
    <property type="protein sequence ID" value="AAA96653.1"/>
    <property type="molecule type" value="Genomic_RNA"/>
</dbReference>
<dbReference type="PIR" id="A03918">
    <property type="entry name" value="MNWVM"/>
</dbReference>
<dbReference type="GO" id="GO:0044162">
    <property type="term" value="C:host cell cytoplasmic vesicle membrane"/>
    <property type="evidence" value="ECO:0007669"/>
    <property type="project" value="UniProtKB-SubCell"/>
</dbReference>
<dbReference type="GO" id="GO:0016020">
    <property type="term" value="C:membrane"/>
    <property type="evidence" value="ECO:0007669"/>
    <property type="project" value="UniProtKB-KW"/>
</dbReference>
<dbReference type="GO" id="GO:0016787">
    <property type="term" value="F:hydrolase activity"/>
    <property type="evidence" value="ECO:0007669"/>
    <property type="project" value="UniProtKB-KW"/>
</dbReference>
<dbReference type="GO" id="GO:0046872">
    <property type="term" value="F:metal ion binding"/>
    <property type="evidence" value="ECO:0007669"/>
    <property type="project" value="UniProtKB-KW"/>
</dbReference>
<dbReference type="GO" id="GO:0000166">
    <property type="term" value="F:nucleotide binding"/>
    <property type="evidence" value="ECO:0007669"/>
    <property type="project" value="UniProtKB-KW"/>
</dbReference>
<dbReference type="GO" id="GO:1990817">
    <property type="term" value="F:poly(A) RNA polymerase activity"/>
    <property type="evidence" value="ECO:0007669"/>
    <property type="project" value="UniProtKB-EC"/>
</dbReference>
<dbReference type="GO" id="GO:0003723">
    <property type="term" value="F:RNA binding"/>
    <property type="evidence" value="ECO:0007669"/>
    <property type="project" value="UniProtKB-KW"/>
</dbReference>
<dbReference type="GO" id="GO:0003968">
    <property type="term" value="F:RNA-directed RNA polymerase activity"/>
    <property type="evidence" value="ECO:0007669"/>
    <property type="project" value="UniProtKB-KW"/>
</dbReference>
<dbReference type="GO" id="GO:0006351">
    <property type="term" value="P:DNA-templated transcription"/>
    <property type="evidence" value="ECO:0007669"/>
    <property type="project" value="InterPro"/>
</dbReference>
<dbReference type="GO" id="GO:0039694">
    <property type="term" value="P:viral RNA genome replication"/>
    <property type="evidence" value="ECO:0007669"/>
    <property type="project" value="InterPro"/>
</dbReference>
<dbReference type="CDD" id="cd23250">
    <property type="entry name" value="Togaviridae_RdRp"/>
    <property type="match status" value="1"/>
</dbReference>
<dbReference type="Gene3D" id="3.40.220.10">
    <property type="entry name" value="Leucine Aminopeptidase, subunit E, domain 1"/>
    <property type="match status" value="1"/>
</dbReference>
<dbReference type="Gene3D" id="3.40.50.150">
    <property type="entry name" value="Vaccinia Virus protein VP39"/>
    <property type="match status" value="1"/>
</dbReference>
<dbReference type="InterPro" id="IPR043502">
    <property type="entry name" value="DNA/RNA_pol_sf"/>
</dbReference>
<dbReference type="InterPro" id="IPR043472">
    <property type="entry name" value="Macro_dom-like"/>
</dbReference>
<dbReference type="InterPro" id="IPR048891">
    <property type="entry name" value="nsP3_ZBD"/>
</dbReference>
<dbReference type="InterPro" id="IPR001788">
    <property type="entry name" value="RNA-dep_RNA_pol_alsuvir"/>
</dbReference>
<dbReference type="InterPro" id="IPR007094">
    <property type="entry name" value="RNA-dir_pol_PSvirus"/>
</dbReference>
<dbReference type="InterPro" id="IPR029063">
    <property type="entry name" value="SAM-dependent_MTases_sf"/>
</dbReference>
<dbReference type="InterPro" id="IPR047311">
    <property type="entry name" value="Togaviridae_RdRp"/>
</dbReference>
<dbReference type="Pfam" id="PF20852">
    <property type="entry name" value="nsP3_ZBD"/>
    <property type="match status" value="1"/>
</dbReference>
<dbReference type="Pfam" id="PF00978">
    <property type="entry name" value="RdRP_2"/>
    <property type="match status" value="1"/>
</dbReference>
<dbReference type="SUPFAM" id="SSF56672">
    <property type="entry name" value="DNA/RNA polymerases"/>
    <property type="match status" value="1"/>
</dbReference>
<dbReference type="SUPFAM" id="SSF52949">
    <property type="entry name" value="Macro domain-like"/>
    <property type="match status" value="1"/>
</dbReference>
<dbReference type="PROSITE" id="PS50507">
    <property type="entry name" value="RDRP_SSRNA_POS"/>
    <property type="match status" value="1"/>
</dbReference>
<protein>
    <recommendedName>
        <fullName>Polyprotein nsP1234</fullName>
        <shortName>P1234</shortName>
    </recommendedName>
    <alternativeName>
        <fullName>Non-structural polyprotein</fullName>
    </alternativeName>
    <component>
        <recommendedName>
            <fullName>Polyprotein P123'</fullName>
            <shortName>P123'</shortName>
        </recommendedName>
    </component>
    <component>
        <recommendedName>
            <fullName>Polyprotein P123</fullName>
            <shortName>P123</shortName>
        </recommendedName>
    </component>
    <component>
        <recommendedName>
            <fullName>Non-structural protein 3'</fullName>
            <shortName>nsP3'</shortName>
            <ecNumber evidence="8">3.1.3.84</ecNumber>
        </recommendedName>
    </component>
    <component>
        <recommendedName>
            <fullName>Non-structural protein 3</fullName>
            <shortName>nsP3</shortName>
            <ecNumber evidence="6">3.1.3.84</ecNumber>
        </recommendedName>
    </component>
    <component>
        <recommendedName>
            <fullName>RNA-directed RNA polymerase nsP4</fullName>
            <ecNumber evidence="2">2.7.7.19</ecNumber>
            <ecNumber evidence="7">2.7.7.48</ecNumber>
        </recommendedName>
        <alternativeName>
            <fullName>Non-structural protein 4</fullName>
            <shortName>nsP4</shortName>
        </alternativeName>
    </component>
</protein>
<sequence>DADLAAVYRAVASLADETVRTMAIPLLSTGTFAGGKDRVLQSLNHLFTALDTTDVDVTIYCRDKSWEKKIQEAIDMRTATELLDDDTTVMKELTRVHPDSCLVGRSGFSTVDGRLHSYLEGTRFHQTAVDVAERPTLWPRREEANEQITHYVLGESMEAIRTKCPVDDTDSSAPPCTVPCLCRYAMTPERVHRLRAAQVKQFTVCSSFPLPKYKIPGVQRVACSAVMLFNHDVPALVSPRKYREPSISSESSSSGLSVFDLDIGSDSEYEPMEPVQPEPLIDLAVVEETAPVRLERVAPVAAPRRARATPFTLEQRVVAPVPAPRTMPVRPPRRKKAATRTPERISFGDLDAECMAIINDDLTFGDFGAGEFERLTSAXLDRAGAYIFSSDTGPGHLQQRSVRQTRLADCVAEDVHEERVFAPKCDKEKERLLLLQMQMAPTEANKSRYQSRKVENMKAEVIDRLLGGAKLFVTPTTDCRYVTHKHPKPMYSTSVAFYLSSAKTAVAACNEFLSRNYPTVTSYQITDEYDAYLDMVDGSESCLDRAAFCPSKLRSFPKKHSYHRAEIRSAVPSPFQNTLQNVLAAATKRNCNVTQMRELPTLDSAVFNVECFKKYACNNDYWDEFAQKPIRLTTENITSYVTRLKGPKAAALFAKTYDLKPLQEVPMDRFVVDMKRDVKVTPGTKHTEERPKVQVIQAAEPLATAYLCGIHRELVRRLNAVLLPNVHTLFDMSAEDFDAIISEHFRPGDAVLETDIASFDKSQDDSLAYTGLMLLEDLGVDQPLLELIEASFGEITSTHLPTGTRFKFGAMMKSGMFLTLFVNTMLNMTIASRVLEERLTNSKCAAFIGDDNIVHGVKSDKLLAERCAAWMNMEVKIIDAVMCERPPYFCGGFIVFDQVTGTCCRVADPLKRLFKLGKPLPAEDKQDEDRRRALADEAQRWNRVGIQADLEAAMNSRYEVEGIRNVITALTTLSRNYHNFRHLRGPVIDLYGGPK</sequence>